<reference key="1">
    <citation type="journal article" date="1990" name="Mol. Endocrinol.">
        <title>Identification and characterization of a rat decidual insulin-like growth factor-binding protein complementary DNA.</title>
        <authorList>
            <person name="Murphy L.J."/>
            <person name="Seneviratne C."/>
            <person name="Ballejo G."/>
            <person name="Croze F."/>
            <person name="Kennedy T.G."/>
        </authorList>
    </citation>
    <scope>NUCLEOTIDE SEQUENCE [MRNA]</scope>
    <source>
        <tissue>Decidua</tissue>
    </source>
</reference>
<reference key="2">
    <citation type="journal article" date="1991" name="Mol. Cell. Biol.">
        <title>The gene encoding rat insulin-like growth factor-binding protein 1 is rapidly and highly induced in regenerating liver.</title>
        <authorList>
            <person name="Mohn K.L."/>
            <person name="Melby A.E."/>
            <person name="Tewari D.S."/>
            <person name="Laz T.M."/>
            <person name="Taub R.A."/>
        </authorList>
    </citation>
    <scope>NUCLEOTIDE SEQUENCE [MRNA]</scope>
    <source>
        <tissue>Liver</tissue>
    </source>
</reference>
<reference key="3">
    <citation type="journal article" date="1992" name="Mol. Endocrinol.">
        <title>Insulin rapidly decreases insulin-like growth factor-binding protein-1 gene transcription in streptozotocin-diabetic rats.</title>
        <authorList>
            <person name="Ooi G.T."/>
            <person name="Tseng L.Y.H."/>
            <person name="Tran M.Q."/>
            <person name="Rechler M.M."/>
        </authorList>
    </citation>
    <scope>NUCLEOTIDE SEQUENCE [MRNA]</scope>
</reference>
<reference key="4">
    <citation type="journal article" date="1994" name="Biochim. Biophys. Acta">
        <title>Dideoxy sequencing and structural analysis of the rat insulin-like growth factor binding protein-1 gene.</title>
        <authorList>
            <person name="Lacson R.G."/>
            <person name="Oehler D."/>
            <person name="Yang E."/>
            <person name="Goswami R."/>
            <person name="Unterman T.G."/>
        </authorList>
    </citation>
    <scope>NUCLEOTIDE SEQUENCE [GENOMIC DNA]</scope>
    <source>
        <strain>Sprague-Dawley</strain>
        <tissue>Liver</tissue>
    </source>
</reference>
<reference key="5">
    <citation type="journal article" date="2004" name="Genome Res.">
        <title>The status, quality, and expansion of the NIH full-length cDNA project: the Mammalian Gene Collection (MGC).</title>
        <authorList>
            <consortium name="The MGC Project Team"/>
        </authorList>
    </citation>
    <scope>NUCLEOTIDE SEQUENCE [LARGE SCALE MRNA]</scope>
    <source>
        <tissue>Kidney</tissue>
    </source>
</reference>
<reference key="6">
    <citation type="journal article" date="1990" name="Endocrinology">
        <title>Production of the rat type 1 insulin-like growth factor-binding protein by well differentiated H4EIIC3 hepatoma cells: identification, purification, and N-terminal amino acid analysis.</title>
        <authorList>
            <person name="Unterman T.G."/>
            <person name="Oehler D.T."/>
            <person name="Gotway M.B."/>
            <person name="Morris P.W."/>
        </authorList>
    </citation>
    <scope>PROTEIN SEQUENCE OF 26-59</scope>
</reference>
<reference key="7">
    <citation type="journal article" date="2002" name="J. Neurosci. Res.">
        <title>Insulin-like growth factor binding proteins-1 and -2 differentially inhibit rat oligodendrocyte precursor cell survival and differentiation in vitro.</title>
        <authorList>
            <person name="Kuehl N.M."/>
            <person name="De Keyser J."/>
            <person name="De Vries H."/>
            <person name="Hoekstra D."/>
        </authorList>
    </citation>
    <scope>FUNCTION</scope>
</reference>
<reference key="8">
    <citation type="journal article" date="2021" name="Cell. Death. Discov.">
        <title>Insulin-like growth factor binding protein-1 regulates HIF-1alpha degradation to inhibit apoptosis in hypoxic cardiomyocytes.</title>
        <authorList>
            <person name="Tang X."/>
            <person name="Jiang H."/>
            <person name="Lin P."/>
            <person name="Zhang Z."/>
            <person name="Chen M."/>
            <person name="Zhang Y."/>
            <person name="Mo J."/>
            <person name="Zhu Y."/>
            <person name="Liu N."/>
            <person name="Chen X."/>
        </authorList>
    </citation>
    <scope>FUNCTION</scope>
    <scope>INDUCTION BY HYPOXIC CONDITION</scope>
    <scope>INTERACTION WITH VHL</scope>
</reference>
<name>IBP1_RAT</name>
<dbReference type="EMBL" id="M58634">
    <property type="protein sequence ID" value="AAA41380.1"/>
    <property type="molecule type" value="mRNA"/>
</dbReference>
<dbReference type="EMBL" id="M89791">
    <property type="protein sequence ID" value="AAA41382.1"/>
    <property type="molecule type" value="mRNA"/>
</dbReference>
<dbReference type="EMBL" id="L22979">
    <property type="protein sequence ID" value="AAA82581.1"/>
    <property type="molecule type" value="Genomic_DNA"/>
</dbReference>
<dbReference type="EMBL" id="BC078889">
    <property type="protein sequence ID" value="AAH78889.1"/>
    <property type="molecule type" value="mRNA"/>
</dbReference>
<dbReference type="PIR" id="A36082">
    <property type="entry name" value="A36082"/>
</dbReference>
<dbReference type="RefSeq" id="NP_037276.1">
    <property type="nucleotide sequence ID" value="NM_013144.2"/>
</dbReference>
<dbReference type="SMR" id="P21743"/>
<dbReference type="FunCoup" id="P21743">
    <property type="interactions" value="34"/>
</dbReference>
<dbReference type="STRING" id="10116.ENSRNOP00000069247"/>
<dbReference type="MEROPS" id="I31.951"/>
<dbReference type="PhosphoSitePlus" id="P21743"/>
<dbReference type="PaxDb" id="10116-ENSRNOP00000011338"/>
<dbReference type="Ensembl" id="ENSRNOT00000077177.2">
    <property type="protein sequence ID" value="ENSRNOP00000069247.1"/>
    <property type="gene ID" value="ENSRNOG00000058780.2"/>
</dbReference>
<dbReference type="GeneID" id="25685"/>
<dbReference type="KEGG" id="rno:25685"/>
<dbReference type="UCSC" id="RGD:2872">
    <property type="organism name" value="rat"/>
</dbReference>
<dbReference type="AGR" id="RGD:2872"/>
<dbReference type="CTD" id="3484"/>
<dbReference type="RGD" id="2872">
    <property type="gene designation" value="Igfbp1"/>
</dbReference>
<dbReference type="eggNOG" id="ENOG502QWRP">
    <property type="taxonomic scope" value="Eukaryota"/>
</dbReference>
<dbReference type="GeneTree" id="ENSGT00940000157394"/>
<dbReference type="HOGENOM" id="CLU_070833_3_0_1"/>
<dbReference type="InParanoid" id="P21743"/>
<dbReference type="OMA" id="TRGDPNC"/>
<dbReference type="OrthoDB" id="9926277at2759"/>
<dbReference type="PhylomeDB" id="P21743"/>
<dbReference type="TreeFam" id="TF331211"/>
<dbReference type="Reactome" id="R-RNO-381426">
    <property type="pathway name" value="Regulation of Insulin-like Growth Factor (IGF) transport and uptake by Insulin-like Growth Factor Binding Proteins (IGFBPs)"/>
</dbReference>
<dbReference type="Reactome" id="R-RNO-8957275">
    <property type="pathway name" value="Post-translational protein phosphorylation"/>
</dbReference>
<dbReference type="PRO" id="PR:P21743"/>
<dbReference type="Proteomes" id="UP000002494">
    <property type="component" value="Chromosome 14"/>
</dbReference>
<dbReference type="Bgee" id="ENSRNOG00000058780">
    <property type="expression patterns" value="Expressed in liver and 7 other cell types or tissues"/>
</dbReference>
<dbReference type="GO" id="GO:0005615">
    <property type="term" value="C:extracellular space"/>
    <property type="evidence" value="ECO:0000314"/>
    <property type="project" value="RGD"/>
</dbReference>
<dbReference type="GO" id="GO:0005794">
    <property type="term" value="C:Golgi apparatus"/>
    <property type="evidence" value="ECO:0007669"/>
    <property type="project" value="Ensembl"/>
</dbReference>
<dbReference type="GO" id="GO:0005520">
    <property type="term" value="F:insulin-like growth factor binding"/>
    <property type="evidence" value="ECO:0000266"/>
    <property type="project" value="RGD"/>
</dbReference>
<dbReference type="GO" id="GO:0031994">
    <property type="term" value="F:insulin-like growth factor I binding"/>
    <property type="evidence" value="ECO:0000266"/>
    <property type="project" value="RGD"/>
</dbReference>
<dbReference type="GO" id="GO:0031995">
    <property type="term" value="F:insulin-like growth factor II binding"/>
    <property type="evidence" value="ECO:0000266"/>
    <property type="project" value="RGD"/>
</dbReference>
<dbReference type="GO" id="GO:0006006">
    <property type="term" value="P:glucose metabolic process"/>
    <property type="evidence" value="ECO:0000304"/>
    <property type="project" value="RGD"/>
</dbReference>
<dbReference type="GO" id="GO:0008286">
    <property type="term" value="P:insulin receptor signaling pathway"/>
    <property type="evidence" value="ECO:0000270"/>
    <property type="project" value="RGD"/>
</dbReference>
<dbReference type="GO" id="GO:0048015">
    <property type="term" value="P:phosphatidylinositol-mediated signaling"/>
    <property type="evidence" value="ECO:0000304"/>
    <property type="project" value="RGD"/>
</dbReference>
<dbReference type="GO" id="GO:0030307">
    <property type="term" value="P:positive regulation of cell growth"/>
    <property type="evidence" value="ECO:0000270"/>
    <property type="project" value="RGD"/>
</dbReference>
<dbReference type="GO" id="GO:0043567">
    <property type="term" value="P:regulation of insulin-like growth factor receptor signaling pathway"/>
    <property type="evidence" value="ECO:0000318"/>
    <property type="project" value="GO_Central"/>
</dbReference>
<dbReference type="GO" id="GO:0032868">
    <property type="term" value="P:response to insulin"/>
    <property type="evidence" value="ECO:0000266"/>
    <property type="project" value="RGD"/>
</dbReference>
<dbReference type="GO" id="GO:0042246">
    <property type="term" value="P:tissue regeneration"/>
    <property type="evidence" value="ECO:0000270"/>
    <property type="project" value="RGD"/>
</dbReference>
<dbReference type="CDD" id="cd00191">
    <property type="entry name" value="TY"/>
    <property type="match status" value="1"/>
</dbReference>
<dbReference type="FunFam" id="4.10.40.20:FF:000001">
    <property type="entry name" value="Insulin-like growth factor binding protein 5"/>
    <property type="match status" value="1"/>
</dbReference>
<dbReference type="FunFam" id="4.10.800.10:FF:000002">
    <property type="entry name" value="Insulin-like growth factor-binding protein 2"/>
    <property type="match status" value="1"/>
</dbReference>
<dbReference type="Gene3D" id="4.10.40.20">
    <property type="match status" value="1"/>
</dbReference>
<dbReference type="Gene3D" id="4.10.800.10">
    <property type="entry name" value="Thyroglobulin type-1"/>
    <property type="match status" value="1"/>
</dbReference>
<dbReference type="InterPro" id="IPR009030">
    <property type="entry name" value="Growth_fac_rcpt_cys_sf"/>
</dbReference>
<dbReference type="InterPro" id="IPR000867">
    <property type="entry name" value="IGFBP-like"/>
</dbReference>
<dbReference type="InterPro" id="IPR022322">
    <property type="entry name" value="IGFBP1"/>
</dbReference>
<dbReference type="InterPro" id="IPR022321">
    <property type="entry name" value="IGFBP_1-6_chordata"/>
</dbReference>
<dbReference type="InterPro" id="IPR017891">
    <property type="entry name" value="Insulin_GF-bd_Cys-rich_CS"/>
</dbReference>
<dbReference type="InterPro" id="IPR000716">
    <property type="entry name" value="Thyroglobulin_1"/>
</dbReference>
<dbReference type="InterPro" id="IPR036857">
    <property type="entry name" value="Thyroglobulin_1_sf"/>
</dbReference>
<dbReference type="PANTHER" id="PTHR11551">
    <property type="entry name" value="INSULIN-LIKE GROWTH FACTOR BINDING PROTEIN"/>
    <property type="match status" value="1"/>
</dbReference>
<dbReference type="PANTHER" id="PTHR11551:SF6">
    <property type="entry name" value="INSULIN-LIKE GROWTH FACTOR-BINDING PROTEIN 1"/>
    <property type="match status" value="1"/>
</dbReference>
<dbReference type="Pfam" id="PF00219">
    <property type="entry name" value="IGFBP"/>
    <property type="match status" value="1"/>
</dbReference>
<dbReference type="Pfam" id="PF00086">
    <property type="entry name" value="Thyroglobulin_1"/>
    <property type="match status" value="1"/>
</dbReference>
<dbReference type="PRINTS" id="PR01976">
    <property type="entry name" value="IGFBPFAMILY"/>
</dbReference>
<dbReference type="PRINTS" id="PR01977">
    <property type="entry name" value="IGFBPFAMILY1"/>
</dbReference>
<dbReference type="SMART" id="SM00121">
    <property type="entry name" value="IB"/>
    <property type="match status" value="1"/>
</dbReference>
<dbReference type="SMART" id="SM00211">
    <property type="entry name" value="TY"/>
    <property type="match status" value="1"/>
</dbReference>
<dbReference type="SUPFAM" id="SSF57184">
    <property type="entry name" value="Growth factor receptor domain"/>
    <property type="match status" value="1"/>
</dbReference>
<dbReference type="SUPFAM" id="SSF57610">
    <property type="entry name" value="Thyroglobulin type-1 domain"/>
    <property type="match status" value="1"/>
</dbReference>
<dbReference type="PROSITE" id="PS00222">
    <property type="entry name" value="IGFBP_N_1"/>
    <property type="match status" value="1"/>
</dbReference>
<dbReference type="PROSITE" id="PS51323">
    <property type="entry name" value="IGFBP_N_2"/>
    <property type="match status" value="1"/>
</dbReference>
<dbReference type="PROSITE" id="PS00484">
    <property type="entry name" value="THYROGLOBULIN_1_1"/>
    <property type="match status" value="1"/>
</dbReference>
<dbReference type="PROSITE" id="PS51162">
    <property type="entry name" value="THYROGLOBULIN_1_2"/>
    <property type="match status" value="1"/>
</dbReference>
<accession>P21743</accession>
<feature type="signal peptide" evidence="6">
    <location>
        <begin position="1"/>
        <end position="25"/>
    </location>
</feature>
<feature type="chain" id="PRO_0000014368" description="Insulin-like growth factor-binding protein 1">
    <location>
        <begin position="26"/>
        <end position="272"/>
    </location>
</feature>
<feature type="domain" description="IGFBP N-terminal" evidence="3">
    <location>
        <begin position="28"/>
        <end position="109"/>
    </location>
</feature>
<feature type="domain" description="Thyroglobulin type-1" evidence="2">
    <location>
        <begin position="186"/>
        <end position="264"/>
    </location>
</feature>
<feature type="region of interest" description="Disordered" evidence="4">
    <location>
        <begin position="115"/>
        <end position="143"/>
    </location>
</feature>
<feature type="short sequence motif" description="Cell attachment site">
    <location>
        <begin position="259"/>
        <end position="261"/>
    </location>
</feature>
<feature type="compositionally biased region" description="Acidic residues" evidence="4">
    <location>
        <begin position="132"/>
        <end position="143"/>
    </location>
</feature>
<feature type="modified residue" description="Phosphoserine" evidence="1">
    <location>
        <position position="139"/>
    </location>
</feature>
<feature type="modified residue" description="Phosphoserine" evidence="1">
    <location>
        <position position="157"/>
    </location>
</feature>
<feature type="modified residue" description="Phosphoserine" evidence="1">
    <location>
        <position position="169"/>
    </location>
</feature>
<feature type="modified residue" description="Phosphothreonine" evidence="1">
    <location>
        <position position="170"/>
    </location>
</feature>
<feature type="modified residue" description="Phosphotyrosine" evidence="1">
    <location>
        <position position="171"/>
    </location>
</feature>
<feature type="modified residue" description="Phosphoserine" evidence="1">
    <location>
        <position position="255"/>
    </location>
</feature>
<feature type="disulfide bond" evidence="3">
    <location>
        <begin position="32"/>
        <end position="59"/>
    </location>
</feature>
<feature type="disulfide bond" evidence="3">
    <location>
        <begin position="35"/>
        <end position="61"/>
    </location>
</feature>
<feature type="disulfide bond" evidence="3">
    <location>
        <begin position="43"/>
        <end position="62"/>
    </location>
</feature>
<feature type="disulfide bond" evidence="3">
    <location>
        <begin position="50"/>
        <end position="65"/>
    </location>
</feature>
<feature type="disulfide bond" evidence="3">
    <location>
        <begin position="73"/>
        <end position="86"/>
    </location>
</feature>
<feature type="disulfide bond" evidence="3">
    <location>
        <begin position="80"/>
        <end position="106"/>
    </location>
</feature>
<feature type="disulfide bond" evidence="2">
    <location>
        <begin position="189"/>
        <end position="219"/>
    </location>
</feature>
<feature type="disulfide bond" evidence="2">
    <location>
        <begin position="230"/>
        <end position="241"/>
    </location>
</feature>
<feature type="disulfide bond" evidence="2">
    <location>
        <begin position="243"/>
        <end position="264"/>
    </location>
</feature>
<feature type="sequence conflict" description="In Ref. 1 and 4." evidence="8" ref="1 4">
    <original>R</original>
    <variation>A</variation>
    <location>
        <position position="79"/>
    </location>
</feature>
<feature type="sequence conflict" description="In Ref. 1." evidence="8" ref="1">
    <original>AA</original>
    <variation>PP</variation>
    <location>
        <begin position="111"/>
        <end position="112"/>
    </location>
</feature>
<feature type="sequence conflict" description="In Ref. 3; AAA41382." evidence="8" ref="3">
    <original>A</original>
    <variation>R</variation>
    <location>
        <position position="201"/>
    </location>
</feature>
<feature type="sequence conflict" description="In Ref. 1." evidence="8" ref="1">
    <original>H</original>
    <variation>N</variation>
    <location>
        <position position="265"/>
    </location>
</feature>
<protein>
    <recommendedName>
        <fullName>Insulin-like growth factor-binding protein 1</fullName>
        <shortName>IBP-1</shortName>
        <shortName>IGF-binding protein 1</shortName>
        <shortName>IGFBP-1</shortName>
    </recommendedName>
</protein>
<proteinExistence type="evidence at protein level"/>
<evidence type="ECO:0000250" key="1">
    <source>
        <dbReference type="UniProtKB" id="P08833"/>
    </source>
</evidence>
<evidence type="ECO:0000255" key="2">
    <source>
        <dbReference type="PROSITE-ProRule" id="PRU00500"/>
    </source>
</evidence>
<evidence type="ECO:0000255" key="3">
    <source>
        <dbReference type="PROSITE-ProRule" id="PRU00653"/>
    </source>
</evidence>
<evidence type="ECO:0000256" key="4">
    <source>
        <dbReference type="SAM" id="MobiDB-lite"/>
    </source>
</evidence>
<evidence type="ECO:0000269" key="5">
    <source>
    </source>
</evidence>
<evidence type="ECO:0000269" key="6">
    <source>
    </source>
</evidence>
<evidence type="ECO:0000269" key="7">
    <source>
    </source>
</evidence>
<evidence type="ECO:0000305" key="8"/>
<keyword id="KW-0903">Direct protein sequencing</keyword>
<keyword id="KW-1015">Disulfide bond</keyword>
<keyword id="KW-0340">Growth factor binding</keyword>
<keyword id="KW-0597">Phosphoprotein</keyword>
<keyword id="KW-1185">Reference proteome</keyword>
<keyword id="KW-0964">Secreted</keyword>
<keyword id="KW-0732">Signal</keyword>
<gene>
    <name type="primary">Igfbp1</name>
    <name type="synonym">Igfbp-1</name>
</gene>
<organism>
    <name type="scientific">Rattus norvegicus</name>
    <name type="common">Rat</name>
    <dbReference type="NCBI Taxonomy" id="10116"/>
    <lineage>
        <taxon>Eukaryota</taxon>
        <taxon>Metazoa</taxon>
        <taxon>Chordata</taxon>
        <taxon>Craniata</taxon>
        <taxon>Vertebrata</taxon>
        <taxon>Euteleostomi</taxon>
        <taxon>Mammalia</taxon>
        <taxon>Eutheria</taxon>
        <taxon>Euarchontoglires</taxon>
        <taxon>Glires</taxon>
        <taxon>Rodentia</taxon>
        <taxon>Myomorpha</taxon>
        <taxon>Muroidea</taxon>
        <taxon>Muridae</taxon>
        <taxon>Murinae</taxon>
        <taxon>Rattus</taxon>
    </lineage>
</organism>
<comment type="function">
    <text evidence="1 5 7">Multifunctional protein that plays a critical role in regulating the availability of IGFs such as IGF1 and IGF2 to their receptors and thereby regulates IGF-mediated cellular processes including cell migration, proliferation, differentiation or apoptosis in a cell-type specific manner (PubMed:12111802). Also plays a positive role in cell migration by interacting with integrin ITGA5:ITGB1 through its RGD motif. Mechanistically, binding to integrins leads to activation of focal adhesion kinase/PTK2 and stimulation of the mitogen-activated protein kinase (MAPK) pathway (By similarity). Regulates cardiomyocyte apoptosis by suppressing HIF-1alpha/HIF1A ubiquitination and subsequent degradation (PubMed:34531382).</text>
</comment>
<comment type="subunit">
    <text evidence="1 7">Binds equally well IGF1 and IGF2. Interacts with integrin ITGA5:ITGB1. Interacts with VHL; this interaction inhibits HIF1A degradation (PubMed:34531382).</text>
</comment>
<comment type="subcellular location">
    <subcellularLocation>
        <location evidence="1">Secreted</location>
    </subcellularLocation>
</comment>
<comment type="induction">
    <text evidence="7">By hypoxia.</text>
</comment>
<sequence>MPEFLTVVSWPFLILLSFQVRVVAGAPQPWHCAPCTAERLELCPPVPASCPEISRPAGCGCCPTCALPLGAACGVATARCAQGLSCRALPGEPRPLHALTRGQGACVLEPAAPATSSLSGSQHEEAKAAVASEDELAESPEMTEEQLLDSFHLMAPSREDQPILWNAISTYSSMRAREITDLKKWKEPCQRELYKVLERLAAAQQKAGDEIYKFYLPNCNKNGFYHSKQCETSLDGEAGLCWCVYPWSGKKIPGSLETRGDPNCHQYFNVQN</sequence>